<proteinExistence type="inferred from homology"/>
<reference key="1">
    <citation type="journal article" date="1995" name="Microbiology">
        <title>Fructose phosphotransferase system of Xanthomonas campestris pv. campestris: characterization of the fruB gene.</title>
        <authorList>
            <person name="de Crecy-Lagard V."/>
            <person name="Binet M."/>
            <person name="Danchin A."/>
        </authorList>
    </citation>
    <scope>NUCLEOTIDE SEQUENCE [GENOMIC DNA]</scope>
    <scope>FUNCTION</scope>
    <scope>DISRUPTION PHENOTYPE</scope>
    <scope>DOMAIN</scope>
    <source>
        <strain>ATCC 13951 / NCIB 11803 / NRRL B-1459</strain>
    </source>
</reference>
<reference key="2">
    <citation type="journal article" date="2002" name="Nature">
        <title>Comparison of the genomes of two Xanthomonas pathogens with differing host specificities.</title>
        <authorList>
            <person name="da Silva A.C.R."/>
            <person name="Ferro J.A."/>
            <person name="Reinach F.C."/>
            <person name="Farah C.S."/>
            <person name="Furlan L.R."/>
            <person name="Quaggio R.B."/>
            <person name="Monteiro-Vitorello C.B."/>
            <person name="Van Sluys M.A."/>
            <person name="Almeida N.F. Jr."/>
            <person name="Alves L.M.C."/>
            <person name="do Amaral A.M."/>
            <person name="Bertolini M.C."/>
            <person name="Camargo L.E.A."/>
            <person name="Camarotte G."/>
            <person name="Cannavan F."/>
            <person name="Cardozo J."/>
            <person name="Chambergo F."/>
            <person name="Ciapina L.P."/>
            <person name="Cicarelli R.M.B."/>
            <person name="Coutinho L.L."/>
            <person name="Cursino-Santos J.R."/>
            <person name="El-Dorry H."/>
            <person name="Faria J.B."/>
            <person name="Ferreira A.J.S."/>
            <person name="Ferreira R.C.C."/>
            <person name="Ferro M.I.T."/>
            <person name="Formighieri E.F."/>
            <person name="Franco M.C."/>
            <person name="Greggio C.C."/>
            <person name="Gruber A."/>
            <person name="Katsuyama A.M."/>
            <person name="Kishi L.T."/>
            <person name="Leite R.P."/>
            <person name="Lemos E.G.M."/>
            <person name="Lemos M.V.F."/>
            <person name="Locali E.C."/>
            <person name="Machado M.A."/>
            <person name="Madeira A.M.B.N."/>
            <person name="Martinez-Rossi N.M."/>
            <person name="Martins E.C."/>
            <person name="Meidanis J."/>
            <person name="Menck C.F.M."/>
            <person name="Miyaki C.Y."/>
            <person name="Moon D.H."/>
            <person name="Moreira L.M."/>
            <person name="Novo M.T.M."/>
            <person name="Okura V.K."/>
            <person name="Oliveira M.C."/>
            <person name="Oliveira V.R."/>
            <person name="Pereira H.A."/>
            <person name="Rossi A."/>
            <person name="Sena J.A.D."/>
            <person name="Silva C."/>
            <person name="de Souza R.F."/>
            <person name="Spinola L.A.F."/>
            <person name="Takita M.A."/>
            <person name="Tamura R.E."/>
            <person name="Teixeira E.C."/>
            <person name="Tezza R.I.D."/>
            <person name="Trindade dos Santos M."/>
            <person name="Truffi D."/>
            <person name="Tsai S.M."/>
            <person name="White F.F."/>
            <person name="Setubal J.C."/>
            <person name="Kitajima J.P."/>
        </authorList>
    </citation>
    <scope>NUCLEOTIDE SEQUENCE [LARGE SCALE GENOMIC DNA]</scope>
    <source>
        <strain>ATCC 33913 / DSM 3586 / NCPPB 528 / LMG 568 / P 25</strain>
    </source>
</reference>
<reference key="3">
    <citation type="journal article" date="1991" name="J. Biol. Chem.">
        <title>Fructose catabolism in Xanthomonas campestris pv. campestris. Sequence of the PTS operon, characterization of the fructose-specific enzymes.</title>
        <authorList>
            <person name="de Crecy-Lagard V."/>
            <person name="Bouvet O.M."/>
            <person name="Lejeune P."/>
            <person name="Danchin A."/>
        </authorList>
    </citation>
    <scope>NUCLEOTIDE SEQUENCE [GENOMIC DNA] OF 825-838</scope>
    <source>
        <strain>ATCC 13951 / NCIB 11803 / NRRL B-1459</strain>
    </source>
</reference>
<comment type="function">
    <text evidence="5">The phosphoenolpyruvate-dependent sugar phosphotransferase system (sugar PTS), a major carbohydrate active transport system, catalyzes the phosphorylation of incoming sugar substrates concomitantly with their translocation across the cell membrane. The enzyme II FruAB PTS system is involved in fructose transport.</text>
</comment>
<comment type="catalytic activity">
    <reaction evidence="1">
        <text>L-histidyl-[protein] + phosphoenolpyruvate = N(pros)-phospho-L-histidyl-[protein] + pyruvate</text>
        <dbReference type="Rhea" id="RHEA:23880"/>
        <dbReference type="Rhea" id="RHEA-COMP:9745"/>
        <dbReference type="Rhea" id="RHEA-COMP:9746"/>
        <dbReference type="ChEBI" id="CHEBI:15361"/>
        <dbReference type="ChEBI" id="CHEBI:29979"/>
        <dbReference type="ChEBI" id="CHEBI:58702"/>
        <dbReference type="ChEBI" id="CHEBI:64837"/>
        <dbReference type="EC" id="2.7.3.9"/>
    </reaction>
</comment>
<comment type="cofactor">
    <cofactor evidence="1">
        <name>Mg(2+)</name>
        <dbReference type="ChEBI" id="CHEBI:18420"/>
    </cofactor>
</comment>
<comment type="subcellular location">
    <subcellularLocation>
        <location evidence="7">Cytoplasm</location>
    </subcellularLocation>
</comment>
<comment type="domain">
    <text evidence="3">The PTS EIIA type-2 domain is phosphorylated by phospho-HPr on a histidyl residue. Then, it transfers the phosphoryl group to the PTS EIIB type-2 domain.</text>
</comment>
<comment type="domain">
    <text evidence="8">In contrast to classical PTS systems, the fructose-specific PTS has no requirement for HPr and Enzyme I; FruB combines a IIA domain with an Enzyme I and a HPr domains.</text>
</comment>
<comment type="disruption phenotype">
    <text evidence="5">Cells lacking this gene grow normally on glucose but are unable to grow on fructose, mannose, mannitol or sucrose.</text>
</comment>
<comment type="similarity">
    <text evidence="7">Belongs to the PEP-utilizing enzyme family.</text>
</comment>
<feature type="chain" id="PRO_0000186514" description="Multiphosphoryl transfer protein">
    <location>
        <begin position="1"/>
        <end position="838"/>
    </location>
</feature>
<feature type="domain" description="PTS EIIA type-2" evidence="3 8">
    <location>
        <begin position="7"/>
        <end position="147"/>
    </location>
</feature>
<feature type="domain" description="HPr" evidence="4 8">
    <location>
        <begin position="161"/>
        <end position="253"/>
    </location>
</feature>
<feature type="region of interest" description="PTS EI" evidence="8">
    <location>
        <begin position="274"/>
        <end position="838"/>
    </location>
</feature>
<feature type="active site" description="Tele-phosphohistidine intermediate; for EIIA activity" evidence="3">
    <location>
        <position position="67"/>
    </location>
</feature>
<feature type="active site" description="Pros-phosphohistidine intermediate; for HPr activity" evidence="4">
    <location>
        <position position="175"/>
    </location>
</feature>
<feature type="active site" description="Tele-phosphohistidine intermediate; for PTS EI activity" evidence="1 3">
    <location>
        <position position="460"/>
    </location>
</feature>
<feature type="active site" description="Proton donor" evidence="1">
    <location>
        <position position="768"/>
    </location>
</feature>
<feature type="binding site" evidence="2">
    <location>
        <position position="567"/>
    </location>
    <ligand>
        <name>phosphoenolpyruvate</name>
        <dbReference type="ChEBI" id="CHEBI:58702"/>
    </ligand>
</feature>
<feature type="binding site" evidence="1">
    <location>
        <position position="603"/>
    </location>
    <ligand>
        <name>phosphoenolpyruvate</name>
        <dbReference type="ChEBI" id="CHEBI:58702"/>
    </ligand>
</feature>
<feature type="binding site" evidence="1">
    <location>
        <position position="697"/>
    </location>
    <ligand>
        <name>Mg(2+)</name>
        <dbReference type="ChEBI" id="CHEBI:18420"/>
    </ligand>
</feature>
<feature type="binding site" evidence="1">
    <location>
        <begin position="720"/>
        <end position="721"/>
    </location>
    <ligand>
        <name>phosphoenolpyruvate</name>
        <dbReference type="ChEBI" id="CHEBI:58702"/>
    </ligand>
</feature>
<feature type="binding site" evidence="1">
    <location>
        <position position="721"/>
    </location>
    <ligand>
        <name>Mg(2+)</name>
        <dbReference type="ChEBI" id="CHEBI:18420"/>
    </ligand>
</feature>
<feature type="binding site" evidence="2">
    <location>
        <position position="731"/>
    </location>
    <ligand>
        <name>phosphoenolpyruvate</name>
        <dbReference type="ChEBI" id="CHEBI:58702"/>
    </ligand>
</feature>
<feature type="modified residue" description="Phosphohistidine; by HPr" evidence="7">
    <location>
        <position position="67"/>
    </location>
</feature>
<feature type="modified residue" description="Phosphohistidine; by EI" evidence="7">
    <location>
        <position position="175"/>
    </location>
</feature>
<feature type="modified residue" description="Phosphohistidine; by autocatalysis" evidence="7">
    <location>
        <position position="460"/>
    </location>
</feature>
<feature type="sequence conflict" description="In Ref. 1; CAA85482." evidence="7" ref="1">
    <original>L</original>
    <variation>V</variation>
    <location>
        <position position="115"/>
    </location>
</feature>
<feature type="sequence conflict" description="In Ref. 1; CAA85482." evidence="7" ref="1">
    <original>P</original>
    <variation>A</variation>
    <location>
        <position position="412"/>
    </location>
</feature>
<feature type="sequence conflict" description="In Ref. 1; CAA85482." evidence="7" ref="1">
    <original>L</original>
    <variation>Q</variation>
    <location>
        <position position="505"/>
    </location>
</feature>
<feature type="sequence conflict" description="In Ref. 1; CAA85482." evidence="7" ref="1">
    <original>EG</original>
    <variation>N</variation>
    <location>
        <begin position="561"/>
        <end position="562"/>
    </location>
</feature>
<feature type="sequence conflict" description="In Ref. 1; CAA85482." evidence="7" ref="1">
    <original>Q</original>
    <variation>H</variation>
    <location>
        <position position="586"/>
    </location>
</feature>
<feature type="sequence conflict" description="In Ref. 1; CAA85482." evidence="7" ref="1">
    <original>R</original>
    <variation>Q</variation>
    <location>
        <position position="593"/>
    </location>
</feature>
<feature type="sequence conflict" description="In Ref. 1; CAA85482." evidence="7" ref="1">
    <original>D</original>
    <variation>N</variation>
    <location>
        <position position="596"/>
    </location>
</feature>
<feature type="sequence conflict" description="In Ref. 1; CAA85482." evidence="7" ref="1">
    <original>L</original>
    <variation>S</variation>
    <location>
        <position position="618"/>
    </location>
</feature>
<feature type="sequence conflict" description="In Ref. 1; CAA85482." evidence="7" ref="1">
    <original>LL</original>
    <variation>SS</variation>
    <location>
        <begin position="634"/>
        <end position="635"/>
    </location>
</feature>
<feature type="sequence conflict" description="In Ref. 1; CAA85482." evidence="7" ref="1">
    <original>L</original>
    <variation>S</variation>
    <location>
        <position position="645"/>
    </location>
</feature>
<feature type="sequence conflict" description="In Ref. 1; CAA85482." evidence="7" ref="1">
    <original>R</original>
    <variation>A</variation>
    <location>
        <position position="680"/>
    </location>
</feature>
<feature type="sequence conflict" description="In Ref. 1; CAA85482." evidence="7" ref="1">
    <original>D</original>
    <variation>H</variation>
    <location>
        <position position="686"/>
    </location>
</feature>
<feature type="sequence conflict" description="In Ref. 1; CAA85482." evidence="7" ref="1">
    <original>D</original>
    <variation>S</variation>
    <location>
        <position position="741"/>
    </location>
</feature>
<feature type="sequence conflict" description="In Ref. 1; CAA85482." evidence="7" ref="1">
    <original>Q</original>
    <variation>H</variation>
    <location>
        <position position="820"/>
    </location>
</feature>
<accession>P45597</accession>
<accession>Q03397</accession>
<organism>
    <name type="scientific">Xanthomonas campestris pv. campestris (strain ATCC 33913 / DSM 3586 / NCPPB 528 / LMG 568 / P 25)</name>
    <dbReference type="NCBI Taxonomy" id="190485"/>
    <lineage>
        <taxon>Bacteria</taxon>
        <taxon>Pseudomonadati</taxon>
        <taxon>Pseudomonadota</taxon>
        <taxon>Gammaproteobacteria</taxon>
        <taxon>Lysobacterales</taxon>
        <taxon>Lysobacteraceae</taxon>
        <taxon>Xanthomonas</taxon>
    </lineage>
</organism>
<keyword id="KW-0963">Cytoplasm</keyword>
<keyword id="KW-0418">Kinase</keyword>
<keyword id="KW-0460">Magnesium</keyword>
<keyword id="KW-0479">Metal-binding</keyword>
<keyword id="KW-0597">Phosphoprotein</keyword>
<keyword id="KW-0598">Phosphotransferase system</keyword>
<keyword id="KW-1185">Reference proteome</keyword>
<keyword id="KW-0762">Sugar transport</keyword>
<keyword id="KW-0808">Transferase</keyword>
<keyword id="KW-0813">Transport</keyword>
<protein>
    <recommendedName>
        <fullName evidence="6">Multiphosphoryl transfer protein</fullName>
        <shortName evidence="6">MTP</shortName>
    </recommendedName>
    <alternativeName>
        <fullName evidence="7">Triphosphoryl transfer protein</fullName>
        <shortName evidence="7">TTP</shortName>
    </alternativeName>
    <domain>
        <recommendedName>
            <fullName evidence="6">Phosphoenolpyruvate-protein phosphotransferase</fullName>
            <ecNumber evidence="1">2.7.3.9</ecNumber>
        </recommendedName>
        <alternativeName>
            <fullName evidence="6">Phosphotransferase system enzyme I</fullName>
        </alternativeName>
    </domain>
    <domain>
        <recommendedName>
            <fullName evidence="6">Phosphocarrier protein HPr</fullName>
            <shortName evidence="6">Protein H</shortName>
        </recommendedName>
    </domain>
    <domain>
        <recommendedName>
            <fullName evidence="6">PTS system fructose-specific EIIA component</fullName>
        </recommendedName>
        <alternativeName>
            <fullName evidence="6">EIII-Fru</fullName>
        </alternativeName>
        <alternativeName>
            <fullName evidence="6">Fructose-specific phosphotransferase enzyme IIA component</fullName>
        </alternativeName>
    </domain>
</protein>
<dbReference type="EC" id="2.7.3.9" evidence="1"/>
<dbReference type="EMBL" id="Z37113">
    <property type="protein sequence ID" value="CAA85482.1"/>
    <property type="molecule type" value="Genomic_DNA"/>
</dbReference>
<dbReference type="EMBL" id="AE008922">
    <property type="protein sequence ID" value="AAM41648.1"/>
    <property type="molecule type" value="Genomic_DNA"/>
</dbReference>
<dbReference type="EMBL" id="M69242">
    <property type="protein sequence ID" value="AAA27600.1"/>
    <property type="molecule type" value="Genomic_DNA"/>
</dbReference>
<dbReference type="PIR" id="C40944">
    <property type="entry name" value="C40944"/>
</dbReference>
<dbReference type="PIR" id="S51680">
    <property type="entry name" value="S51680"/>
</dbReference>
<dbReference type="RefSeq" id="NP_637724.1">
    <property type="nucleotide sequence ID" value="NC_003902.1"/>
</dbReference>
<dbReference type="SMR" id="P45597"/>
<dbReference type="STRING" id="190485.XCC2370"/>
<dbReference type="EnsemblBacteria" id="AAM41648">
    <property type="protein sequence ID" value="AAM41648"/>
    <property type="gene ID" value="XCC2370"/>
</dbReference>
<dbReference type="KEGG" id="xcc:XCC2370"/>
<dbReference type="PATRIC" id="fig|190485.4.peg.2524"/>
<dbReference type="eggNOG" id="COG1080">
    <property type="taxonomic scope" value="Bacteria"/>
</dbReference>
<dbReference type="eggNOG" id="COG4668">
    <property type="taxonomic scope" value="Bacteria"/>
</dbReference>
<dbReference type="HOGENOM" id="CLU_007308_4_0_6"/>
<dbReference type="OrthoDB" id="9765468at2"/>
<dbReference type="Proteomes" id="UP000001010">
    <property type="component" value="Chromosome"/>
</dbReference>
<dbReference type="GO" id="GO:0005737">
    <property type="term" value="C:cytoplasm"/>
    <property type="evidence" value="ECO:0007669"/>
    <property type="project" value="UniProtKB-SubCell"/>
</dbReference>
<dbReference type="GO" id="GO:0016301">
    <property type="term" value="F:kinase activity"/>
    <property type="evidence" value="ECO:0007669"/>
    <property type="project" value="UniProtKB-KW"/>
</dbReference>
<dbReference type="GO" id="GO:0046872">
    <property type="term" value="F:metal ion binding"/>
    <property type="evidence" value="ECO:0007669"/>
    <property type="project" value="UniProtKB-KW"/>
</dbReference>
<dbReference type="GO" id="GO:0008965">
    <property type="term" value="F:phosphoenolpyruvate-protein phosphotransferase activity"/>
    <property type="evidence" value="ECO:0000318"/>
    <property type="project" value="GO_Central"/>
</dbReference>
<dbReference type="GO" id="GO:0015764">
    <property type="term" value="P:N-acetylglucosamine transport"/>
    <property type="evidence" value="ECO:0000318"/>
    <property type="project" value="GO_Central"/>
</dbReference>
<dbReference type="GO" id="GO:0009401">
    <property type="term" value="P:phosphoenolpyruvate-dependent sugar phosphotransferase system"/>
    <property type="evidence" value="ECO:0007669"/>
    <property type="project" value="UniProtKB-KW"/>
</dbReference>
<dbReference type="CDD" id="cd00367">
    <property type="entry name" value="PTS-HPr_like"/>
    <property type="match status" value="1"/>
</dbReference>
<dbReference type="CDD" id="cd00211">
    <property type="entry name" value="PTS_IIA_fru"/>
    <property type="match status" value="1"/>
</dbReference>
<dbReference type="Gene3D" id="3.30.1340.10">
    <property type="entry name" value="HPr-like"/>
    <property type="match status" value="1"/>
</dbReference>
<dbReference type="Gene3D" id="3.40.930.10">
    <property type="entry name" value="Mannitol-specific EII, Chain A"/>
    <property type="match status" value="1"/>
</dbReference>
<dbReference type="Gene3D" id="3.20.20.60">
    <property type="entry name" value="Phosphoenolpyruvate-binding domains"/>
    <property type="match status" value="1"/>
</dbReference>
<dbReference type="Gene3D" id="3.50.30.10">
    <property type="entry name" value="Phosphohistidine domain"/>
    <property type="match status" value="1"/>
</dbReference>
<dbReference type="Gene3D" id="1.10.274.10">
    <property type="entry name" value="PtsI, HPr-binding domain"/>
    <property type="match status" value="1"/>
</dbReference>
<dbReference type="InterPro" id="IPR000032">
    <property type="entry name" value="HPr-like"/>
</dbReference>
<dbReference type="InterPro" id="IPR035895">
    <property type="entry name" value="HPr-like_sf"/>
</dbReference>
<dbReference type="InterPro" id="IPR008279">
    <property type="entry name" value="PEP-util_enz_mobile_dom"/>
</dbReference>
<dbReference type="InterPro" id="IPR050499">
    <property type="entry name" value="PEP-utilizing_PTS_enzyme"/>
</dbReference>
<dbReference type="InterPro" id="IPR018274">
    <property type="entry name" value="PEP_util_AS"/>
</dbReference>
<dbReference type="InterPro" id="IPR000121">
    <property type="entry name" value="PEP_util_C"/>
</dbReference>
<dbReference type="InterPro" id="IPR023151">
    <property type="entry name" value="PEP_util_CS"/>
</dbReference>
<dbReference type="InterPro" id="IPR036637">
    <property type="entry name" value="Phosphohistidine_dom_sf"/>
</dbReference>
<dbReference type="InterPro" id="IPR016152">
    <property type="entry name" value="PTrfase/Anion_transptr"/>
</dbReference>
<dbReference type="InterPro" id="IPR006318">
    <property type="entry name" value="PTS_EI-like"/>
</dbReference>
<dbReference type="InterPro" id="IPR002178">
    <property type="entry name" value="PTS_EIIA_type-2_dom"/>
</dbReference>
<dbReference type="InterPro" id="IPR008731">
    <property type="entry name" value="PTS_EIN"/>
</dbReference>
<dbReference type="InterPro" id="IPR001020">
    <property type="entry name" value="PTS_HPr_His_P_site"/>
</dbReference>
<dbReference type="InterPro" id="IPR002114">
    <property type="entry name" value="PTS_HPr_Ser_P_site"/>
</dbReference>
<dbReference type="InterPro" id="IPR036618">
    <property type="entry name" value="PtsI_HPr-bd_sf"/>
</dbReference>
<dbReference type="InterPro" id="IPR015813">
    <property type="entry name" value="Pyrv/PenolPyrv_kinase-like_dom"/>
</dbReference>
<dbReference type="InterPro" id="IPR040442">
    <property type="entry name" value="Pyrv_kinase-like_dom_sf"/>
</dbReference>
<dbReference type="NCBIfam" id="TIGR01003">
    <property type="entry name" value="PTS_HPr_family"/>
    <property type="match status" value="1"/>
</dbReference>
<dbReference type="NCBIfam" id="TIGR01417">
    <property type="entry name" value="PTS_I_fam"/>
    <property type="match status" value="1"/>
</dbReference>
<dbReference type="PANTHER" id="PTHR46244">
    <property type="entry name" value="PHOSPHOENOLPYRUVATE-PROTEIN PHOSPHOTRANSFERASE"/>
    <property type="match status" value="1"/>
</dbReference>
<dbReference type="PANTHER" id="PTHR46244:SF6">
    <property type="entry name" value="PHOSPHOENOLPYRUVATE-PROTEIN PHOSPHOTRANSFERASE"/>
    <property type="match status" value="1"/>
</dbReference>
<dbReference type="Pfam" id="PF05524">
    <property type="entry name" value="PEP-utilisers_N"/>
    <property type="match status" value="1"/>
</dbReference>
<dbReference type="Pfam" id="PF00391">
    <property type="entry name" value="PEP-utilizers"/>
    <property type="match status" value="1"/>
</dbReference>
<dbReference type="Pfam" id="PF02896">
    <property type="entry name" value="PEP-utilizers_C"/>
    <property type="match status" value="1"/>
</dbReference>
<dbReference type="Pfam" id="PF00381">
    <property type="entry name" value="PTS-HPr"/>
    <property type="match status" value="1"/>
</dbReference>
<dbReference type="Pfam" id="PF00359">
    <property type="entry name" value="PTS_EIIA_2"/>
    <property type="match status" value="1"/>
</dbReference>
<dbReference type="PRINTS" id="PR00107">
    <property type="entry name" value="PHOSPHOCPHPR"/>
</dbReference>
<dbReference type="PRINTS" id="PR01736">
    <property type="entry name" value="PHPHTRNFRASE"/>
</dbReference>
<dbReference type="SUPFAM" id="SSF47831">
    <property type="entry name" value="Enzyme I of the PEP:sugar phosphotransferase system HPr-binding (sub)domain"/>
    <property type="match status" value="1"/>
</dbReference>
<dbReference type="SUPFAM" id="SSF55594">
    <property type="entry name" value="HPr-like"/>
    <property type="match status" value="1"/>
</dbReference>
<dbReference type="SUPFAM" id="SSF55804">
    <property type="entry name" value="Phoshotransferase/anion transport protein"/>
    <property type="match status" value="1"/>
</dbReference>
<dbReference type="SUPFAM" id="SSF51621">
    <property type="entry name" value="Phosphoenolpyruvate/pyruvate domain"/>
    <property type="match status" value="1"/>
</dbReference>
<dbReference type="SUPFAM" id="SSF52009">
    <property type="entry name" value="Phosphohistidine domain"/>
    <property type="match status" value="1"/>
</dbReference>
<dbReference type="PROSITE" id="PS00742">
    <property type="entry name" value="PEP_ENZYMES_2"/>
    <property type="match status" value="1"/>
</dbReference>
<dbReference type="PROSITE" id="PS00370">
    <property type="entry name" value="PEP_ENZYMES_PHOS_SITE"/>
    <property type="match status" value="1"/>
</dbReference>
<dbReference type="PROSITE" id="PS51094">
    <property type="entry name" value="PTS_EIIA_TYPE_2"/>
    <property type="match status" value="1"/>
</dbReference>
<dbReference type="PROSITE" id="PS00372">
    <property type="entry name" value="PTS_EIIA_TYPE_2_HIS"/>
    <property type="match status" value="1"/>
</dbReference>
<dbReference type="PROSITE" id="PS51350">
    <property type="entry name" value="PTS_HPR_DOM"/>
    <property type="match status" value="1"/>
</dbReference>
<dbReference type="PROSITE" id="PS00369">
    <property type="entry name" value="PTS_HPR_HIS"/>
    <property type="match status" value="1"/>
</dbReference>
<dbReference type="PROSITE" id="PS00589">
    <property type="entry name" value="PTS_HPR_SER"/>
    <property type="match status" value="1"/>
</dbReference>
<sequence length="838" mass="88747">MSSPSIAPVTPDLVRLRATARDKDDAIAQAAQLLVAAGCVAPGYDASMRRREGLANTFLGHGLAIPHGVGEDRHLVRRDGIAVLQLPEGVEWNPGQTTRLVVGIAAQSDTHITLLRRLTRLIQDPAQLEALFTTDDPAVIVAALTGDRAPDTSAAPATDLAERFEWTIAYPSGLHARPATRWAETARGFSARAQVRAGDQAADAKSLVGLLQLGLRAGDSITVSAKGSDAPALLKRLRAVMDSLTAQEKADAERAAQRRAAPVIGWTPPQAQPAIVGIGASPGVAIGIVHRLRAAQTEVADQPIGLGDGGVLLHDALTRTRQQLAAIQDDTQRRLGASDAAIFKAQAELLNDTDLITRTCQLMVEGHGVAWSWHQAVEQIASGLAALGNPVLAGRAADLRDVGRRVLAQLDPAAAGAGLTDLPEQPCILLAGDLSPSDTANLDTDCVLGLATAQGGPTSHTAILSRTLGLPALVAAGGQLLDIEDGVTAIIDGSSGRLYINPSELDLDAARTHIAEQQAIREREAAQRALPAETTDGHHIDIGANVNLPEQVAMALTQGAEGVGLMRTEFLFLERGSTPTEDEQYQTYLAMARALDGRPLIVRALDIGGDKQVAHLELPHEENPFLGVRGARLLLRRPDLLEPQLRALYRAAKDGARLSIMFPMITSVPELISLREICARIRAELDAPELPIGIMIEVPAAAAQADVLARHADFFSIGTNDLTQYVLAIDRQNPELAAEADSLHPAVLRMIRSTIDGARKHDRWVGVCGGLAGDPFGASLLAGLGVQELSMTPNDIPAVKARLRGRALSALQQLAEQALQCETAEQVRALEAQREGQA</sequence>
<name>PTFAX_XANCP</name>
<evidence type="ECO:0000250" key="1">
    <source>
        <dbReference type="UniProtKB" id="P08839"/>
    </source>
</evidence>
<evidence type="ECO:0000250" key="2">
    <source>
        <dbReference type="UniProtKB" id="P23533"/>
    </source>
</evidence>
<evidence type="ECO:0000255" key="3">
    <source>
        <dbReference type="PROSITE-ProRule" id="PRU00417"/>
    </source>
</evidence>
<evidence type="ECO:0000255" key="4">
    <source>
        <dbReference type="PROSITE-ProRule" id="PRU00681"/>
    </source>
</evidence>
<evidence type="ECO:0000269" key="5">
    <source>
    </source>
</evidence>
<evidence type="ECO:0000303" key="6">
    <source>
    </source>
</evidence>
<evidence type="ECO:0000305" key="7"/>
<evidence type="ECO:0000305" key="8">
    <source>
    </source>
</evidence>
<gene>
    <name evidence="6" type="primary">fruB</name>
    <name type="ordered locus">XCC2370</name>
</gene>